<feature type="chain" id="PRO_0000416410" description="Uncharacterized NAD-dependent oxidoreductase MAP_4146">
    <location>
        <begin position="1"/>
        <end position="275"/>
    </location>
</feature>
<feature type="active site" description="Proton acceptor" evidence="2">
    <location>
        <position position="173"/>
    </location>
</feature>
<feature type="binding site" evidence="3">
    <location>
        <begin position="20"/>
        <end position="22"/>
    </location>
    <ligand>
        <name>NAD(+)</name>
        <dbReference type="ChEBI" id="CHEBI:57540"/>
    </ligand>
</feature>
<feature type="binding site" evidence="3">
    <location>
        <begin position="41"/>
        <end position="42"/>
    </location>
    <ligand>
        <name>NAD(+)</name>
        <dbReference type="ChEBI" id="CHEBI:57540"/>
    </ligand>
</feature>
<feature type="binding site" evidence="3">
    <location>
        <begin position="80"/>
        <end position="81"/>
    </location>
    <ligand>
        <name>NAD(+)</name>
        <dbReference type="ChEBI" id="CHEBI:57540"/>
    </ligand>
</feature>
<feature type="binding site" evidence="3">
    <location>
        <position position="107"/>
    </location>
    <ligand>
        <name>NAD(+)</name>
        <dbReference type="ChEBI" id="CHEBI:57540"/>
    </ligand>
</feature>
<feature type="binding site" evidence="1">
    <location>
        <position position="160"/>
    </location>
    <ligand>
        <name>substrate</name>
    </ligand>
</feature>
<feature type="binding site" evidence="3">
    <location>
        <position position="177"/>
    </location>
    <ligand>
        <name>NAD(+)</name>
        <dbReference type="ChEBI" id="CHEBI:57540"/>
    </ligand>
</feature>
<feature type="binding site" evidence="3">
    <location>
        <begin position="206"/>
        <end position="208"/>
    </location>
    <ligand>
        <name>NAD(+)</name>
        <dbReference type="ChEBI" id="CHEBI:57540"/>
    </ligand>
</feature>
<feature type="turn" evidence="5">
    <location>
        <begin position="7"/>
        <end position="10"/>
    </location>
</feature>
<feature type="strand" evidence="5">
    <location>
        <begin position="12"/>
        <end position="17"/>
    </location>
</feature>
<feature type="helix" evidence="5">
    <location>
        <begin position="21"/>
        <end position="32"/>
    </location>
</feature>
<feature type="strand" evidence="5">
    <location>
        <begin position="36"/>
        <end position="41"/>
    </location>
</feature>
<feature type="helix" evidence="5">
    <location>
        <begin position="57"/>
        <end position="68"/>
    </location>
</feature>
<feature type="turn" evidence="5">
    <location>
        <begin position="69"/>
        <end position="71"/>
    </location>
</feature>
<feature type="strand" evidence="5">
    <location>
        <begin position="74"/>
        <end position="78"/>
    </location>
</feature>
<feature type="helix" evidence="5">
    <location>
        <begin position="84"/>
        <end position="98"/>
    </location>
</feature>
<feature type="strand" evidence="5">
    <location>
        <begin position="103"/>
        <end position="106"/>
    </location>
</feature>
<feature type="helix" evidence="5">
    <location>
        <begin position="116"/>
        <end position="118"/>
    </location>
</feature>
<feature type="helix" evidence="5">
    <location>
        <begin position="121"/>
        <end position="131"/>
    </location>
</feature>
<feature type="helix" evidence="5">
    <location>
        <begin position="133"/>
        <end position="149"/>
    </location>
</feature>
<feature type="strand" evidence="5">
    <location>
        <begin position="153"/>
        <end position="158"/>
    </location>
</feature>
<feature type="helix" evidence="5">
    <location>
        <begin position="161"/>
        <end position="163"/>
    </location>
</feature>
<feature type="helix" evidence="5">
    <location>
        <begin position="171"/>
        <end position="191"/>
    </location>
</feature>
<feature type="helix" evidence="5">
    <location>
        <begin position="192"/>
        <end position="194"/>
    </location>
</feature>
<feature type="strand" evidence="5">
    <location>
        <begin position="196"/>
        <end position="203"/>
    </location>
</feature>
<feature type="helix" evidence="5">
    <location>
        <begin position="213"/>
        <end position="222"/>
    </location>
</feature>
<feature type="helix" evidence="5">
    <location>
        <begin position="224"/>
        <end position="229"/>
    </location>
</feature>
<feature type="helix" evidence="5">
    <location>
        <begin position="243"/>
        <end position="254"/>
    </location>
</feature>
<feature type="helix" evidence="5">
    <location>
        <begin position="256"/>
        <end position="258"/>
    </location>
</feature>
<feature type="strand" evidence="5">
    <location>
        <begin position="265"/>
        <end position="269"/>
    </location>
</feature>
<feature type="helix" evidence="5">
    <location>
        <begin position="272"/>
        <end position="274"/>
    </location>
</feature>
<dbReference type="EC" id="1.-.-.-"/>
<dbReference type="EMBL" id="AE016958">
    <property type="protein sequence ID" value="AAS06696.1"/>
    <property type="molecule type" value="Genomic_DNA"/>
</dbReference>
<dbReference type="RefSeq" id="WP_003879429.1">
    <property type="nucleotide sequence ID" value="NZ_CP106873.1"/>
</dbReference>
<dbReference type="PDB" id="3PGX">
    <property type="method" value="X-ray"/>
    <property type="resolution" value="1.85 A"/>
    <property type="chains" value="A/B/C/D=2-275"/>
</dbReference>
<dbReference type="PDBsum" id="3PGX"/>
<dbReference type="SMR" id="Q73SC8"/>
<dbReference type="STRING" id="262316.MAP_4146"/>
<dbReference type="KEGG" id="mpa:MAP_4146"/>
<dbReference type="eggNOG" id="COG1028">
    <property type="taxonomic scope" value="Bacteria"/>
</dbReference>
<dbReference type="HOGENOM" id="CLU_010194_1_0_11"/>
<dbReference type="BRENDA" id="1.1.1.275">
    <property type="organism ID" value="3508"/>
</dbReference>
<dbReference type="EvolutionaryTrace" id="Q73SC8"/>
<dbReference type="Proteomes" id="UP000000580">
    <property type="component" value="Chromosome"/>
</dbReference>
<dbReference type="GO" id="GO:0016491">
    <property type="term" value="F:oxidoreductase activity"/>
    <property type="evidence" value="ECO:0007669"/>
    <property type="project" value="UniProtKB-KW"/>
</dbReference>
<dbReference type="CDD" id="cd05233">
    <property type="entry name" value="SDR_c"/>
    <property type="match status" value="1"/>
</dbReference>
<dbReference type="FunFam" id="3.40.50.720:FF:000084">
    <property type="entry name" value="Short-chain dehydrogenase reductase"/>
    <property type="match status" value="1"/>
</dbReference>
<dbReference type="Gene3D" id="3.40.50.720">
    <property type="entry name" value="NAD(P)-binding Rossmann-like Domain"/>
    <property type="match status" value="1"/>
</dbReference>
<dbReference type="InterPro" id="IPR036291">
    <property type="entry name" value="NAD(P)-bd_dom_sf"/>
</dbReference>
<dbReference type="InterPro" id="IPR020904">
    <property type="entry name" value="Sc_DH/Rdtase_CS"/>
</dbReference>
<dbReference type="InterPro" id="IPR002347">
    <property type="entry name" value="SDR_fam"/>
</dbReference>
<dbReference type="InterPro" id="IPR023985">
    <property type="entry name" value="SDR_subfam_1"/>
</dbReference>
<dbReference type="NCBIfam" id="NF009467">
    <property type="entry name" value="PRK12826.1-3"/>
    <property type="match status" value="1"/>
</dbReference>
<dbReference type="NCBIfam" id="TIGR03971">
    <property type="entry name" value="SDR_subfam_1"/>
    <property type="match status" value="1"/>
</dbReference>
<dbReference type="PANTHER" id="PTHR24321">
    <property type="entry name" value="DEHYDROGENASES, SHORT CHAIN"/>
    <property type="match status" value="1"/>
</dbReference>
<dbReference type="PANTHER" id="PTHR24321:SF8">
    <property type="entry name" value="ESTRADIOL 17-BETA-DEHYDROGENASE 8-RELATED"/>
    <property type="match status" value="1"/>
</dbReference>
<dbReference type="Pfam" id="PF13561">
    <property type="entry name" value="adh_short_C2"/>
    <property type="match status" value="1"/>
</dbReference>
<dbReference type="PRINTS" id="PR00081">
    <property type="entry name" value="GDHRDH"/>
</dbReference>
<dbReference type="PRINTS" id="PR00080">
    <property type="entry name" value="SDRFAMILY"/>
</dbReference>
<dbReference type="SMART" id="SM00822">
    <property type="entry name" value="PKS_KR"/>
    <property type="match status" value="1"/>
</dbReference>
<dbReference type="SUPFAM" id="SSF51735">
    <property type="entry name" value="NAD(P)-binding Rossmann-fold domains"/>
    <property type="match status" value="1"/>
</dbReference>
<dbReference type="PROSITE" id="PS00061">
    <property type="entry name" value="ADH_SHORT"/>
    <property type="match status" value="1"/>
</dbReference>
<gene>
    <name type="ordered locus">MAP_4146</name>
</gene>
<sequence length="275" mass="28940">MAGQAGSLQGRVAFITGAARGQGRSHAVRLAAEGADIIACDICAPVSASVTYAPASPEDLDETARLVEDQGRKALTRVLDVRDDAALRELVADGMEQFGRLDVVVANAGVLSWGRVWELTDEQWDTVIGVNLTGTWRTLRATVPAMIEAGNGGSIVVVSSSAGLKATPGNGHYSASKHGLTALTNTLAIELGEYGIRVNSIHPYSVETPMIEPEAMMEIFARHPSFVHSFPPMPVQPNGFMTADEVADVVAWLAGDGSGTLTGTQIPVDKGALKY</sequence>
<proteinExistence type="evidence at protein level"/>
<comment type="similarity">
    <text evidence="4">Belongs to the short-chain dehydrogenases/reductases (SDR) family.</text>
</comment>
<reference key="1">
    <citation type="journal article" date="2005" name="Proc. Natl. Acad. Sci. U.S.A.">
        <title>The complete genome sequence of Mycobacterium avium subspecies paratuberculosis.</title>
        <authorList>
            <person name="Li L."/>
            <person name="Bannantine J.P."/>
            <person name="Zhang Q."/>
            <person name="Amonsin A."/>
            <person name="May B.J."/>
            <person name="Alt D."/>
            <person name="Banerji N."/>
            <person name="Kanjilal S."/>
            <person name="Kapur V."/>
        </authorList>
    </citation>
    <scope>NUCLEOTIDE SEQUENCE [LARGE SCALE GENOMIC DNA]</scope>
    <source>
        <strain>ATCC BAA-968 / K-10</strain>
    </source>
</reference>
<reference key="2">
    <citation type="submission" date="2010-11" db="PDB data bank">
        <title>Crystal structure of a putative carveol dehydrogenase from Mycobacterium paratuberculosis bound to nicotinamide adenine dinucleotide.</title>
        <authorList>
            <consortium name="Seattle structural genomics center for infectious disease (SSGCID)"/>
        </authorList>
    </citation>
    <scope>X-RAY CRYSTALLOGRAPHY (1.85 ANGSTROMS) OF 2-275 IN COMPLEX WITH NAD</scope>
</reference>
<evidence type="ECO:0000250" key="1"/>
<evidence type="ECO:0000255" key="2">
    <source>
        <dbReference type="PROSITE-ProRule" id="PRU10001"/>
    </source>
</evidence>
<evidence type="ECO:0000269" key="3">
    <source ref="2"/>
</evidence>
<evidence type="ECO:0000305" key="4"/>
<evidence type="ECO:0007829" key="5">
    <source>
        <dbReference type="PDB" id="3PGX"/>
    </source>
</evidence>
<name>Y4146_MYCPA</name>
<organism>
    <name type="scientific">Mycolicibacterium paratuberculosis (strain ATCC BAA-968 / K-10)</name>
    <name type="common">Mycobacterium paratuberculosis</name>
    <dbReference type="NCBI Taxonomy" id="262316"/>
    <lineage>
        <taxon>Bacteria</taxon>
        <taxon>Bacillati</taxon>
        <taxon>Actinomycetota</taxon>
        <taxon>Actinomycetes</taxon>
        <taxon>Mycobacteriales</taxon>
        <taxon>Mycobacteriaceae</taxon>
        <taxon>Mycobacterium</taxon>
        <taxon>Mycobacterium avium complex (MAC)</taxon>
    </lineage>
</organism>
<keyword id="KW-0002">3D-structure</keyword>
<keyword id="KW-0520">NAD</keyword>
<keyword id="KW-0560">Oxidoreductase</keyword>
<keyword id="KW-1185">Reference proteome</keyword>
<accession>Q73SC8</accession>
<protein>
    <recommendedName>
        <fullName>Uncharacterized NAD-dependent oxidoreductase MAP_4146</fullName>
        <ecNumber>1.-.-.-</ecNumber>
    </recommendedName>
</protein>